<protein>
    <recommendedName>
        <fullName>Spore coat protein SP85</fullName>
    </recommendedName>
    <alternativeName>
        <fullName>Cellulose-binding protein SP85</fullName>
    </alternativeName>
    <alternativeName>
        <fullName>Prespore protein 14E6</fullName>
    </alternativeName>
    <alternativeName>
        <fullName>Prespore protein B</fullName>
    </alternativeName>
</protein>
<feature type="signal peptide" evidence="1">
    <location>
        <begin position="1"/>
        <end position="19"/>
    </location>
</feature>
<feature type="chain" id="PRO_0000032668" description="Spore coat protein SP85">
    <location>
        <begin position="20"/>
        <end position="532"/>
    </location>
</feature>
<feature type="domain" description="Follistatin-like 1">
    <location>
        <begin position="267"/>
        <end position="289"/>
    </location>
</feature>
<feature type="domain" description="Follistatin-like 2">
    <location>
        <begin position="335"/>
        <end position="359"/>
    </location>
</feature>
<feature type="domain" description="Follistatin-like 3">
    <location>
        <begin position="400"/>
        <end position="423"/>
    </location>
</feature>
<feature type="domain" description="Follistatin-like 4">
    <location>
        <begin position="430"/>
        <end position="452"/>
    </location>
</feature>
<feature type="region of interest" description="Disordered" evidence="2">
    <location>
        <begin position="197"/>
        <end position="265"/>
    </location>
</feature>
<feature type="region of interest" description="Disordered" evidence="2">
    <location>
        <begin position="297"/>
        <end position="320"/>
    </location>
</feature>
<feature type="compositionally biased region" description="Pro residues" evidence="2">
    <location>
        <begin position="201"/>
        <end position="263"/>
    </location>
</feature>
<feature type="glycosylation site" description="N-linked (GlcNAc...) asparagine" evidence="1">
    <location>
        <position position="47"/>
    </location>
</feature>
<feature type="sequence variant" description="In strain: WS576 and WS380B.">
    <location>
        <begin position="222"/>
        <end position="229"/>
    </location>
</feature>
<feature type="sequence variant" description="In strain: WS576 and WS380B.">
    <original>T</original>
    <variation>S</variation>
    <location>
        <position position="233"/>
    </location>
</feature>
<feature type="sequence variant" description="In strain: WS576 and WS380B.">
    <original>T</original>
    <variation>S</variation>
    <location>
        <position position="237"/>
    </location>
</feature>
<feature type="sequence variant" description="In strain: WS380B.">
    <original>PTYPPTQ</original>
    <variation>RSYPQTP</variation>
    <location>
        <begin position="252"/>
        <end position="258"/>
    </location>
</feature>
<feature type="sequence variant" description="In strain: WS576.">
    <original>TY</original>
    <variation>SC</variation>
    <location>
        <begin position="253"/>
        <end position="254"/>
    </location>
</feature>
<feature type="sequence variant" description="In strain: WS576.">
    <location>
        <begin position="255"/>
        <end position="258"/>
    </location>
</feature>
<feature type="sequence variant" description="In strain: WS380B.">
    <original>T</original>
    <variation>S</variation>
    <location>
        <position position="261"/>
    </location>
</feature>
<feature type="sequence variant" description="In strain: WS576.">
    <original>P</original>
    <variation>S</variation>
    <location>
        <position position="315"/>
    </location>
</feature>
<feature type="mutagenesis site" description="In ANC1(B); no effect on cellulose binding. Loss of cellulose binding; when associated with 390-SGE-392, 417-QGE-419 and 445-SAAQ-448." evidence="3">
    <original>WEN</original>
    <variation>SKH</variation>
    <location>
        <begin position="352"/>
        <end position="354"/>
    </location>
</feature>
<feature type="mutagenesis site" description="In ANC1(C); no effect on cellulose binding. Loss of cellulose binding; when associated with 352-SKH-354, 417-QGE-419 and 445-SAAQ-448." evidence="3">
    <original>RGK</original>
    <variation>SGE</variation>
    <location>
        <begin position="390"/>
        <end position="392"/>
    </location>
</feature>
<feature type="mutagenesis site" description="In ANC1(D); no effect on cellulose binding. Loss of cellulose binding; when associated with 352-SKH-354, 390-SGE-392 and 445-SAAQ-448." evidence="3">
    <original>KGQ</original>
    <variation>QGE</variation>
    <location>
        <begin position="417"/>
        <end position="419"/>
    </location>
</feature>
<feature type="mutagenesis site" description="In ANC1(E); no effect on cellulose binding. Loss of cellulose binding; when associated with 352-SKH-354, 390-SGE-392 and 417-QGE-419." evidence="3">
    <original>RRGE</original>
    <variation>SAAQ</variation>
    <location>
        <begin position="445"/>
        <end position="448"/>
    </location>
</feature>
<feature type="sequence conflict" description="In Ref. 1; AAC60506." evidence="6" ref="1">
    <location>
        <begin position="215"/>
        <end position="326"/>
    </location>
</feature>
<feature type="sequence conflict" description="In Ref. 2; AAC19123." evidence="6" ref="2">
    <original>T</original>
    <variation>S</variation>
    <location>
        <position position="249"/>
    </location>
</feature>
<feature type="sequence conflict" description="In Ref. 1; AAC60506." evidence="6" ref="1">
    <original>R</original>
    <variation>S</variation>
    <location>
        <position position="455"/>
    </location>
</feature>
<organism>
    <name type="scientific">Dictyostelium discoideum</name>
    <name type="common">Social amoeba</name>
    <dbReference type="NCBI Taxonomy" id="44689"/>
    <lineage>
        <taxon>Eukaryota</taxon>
        <taxon>Amoebozoa</taxon>
        <taxon>Evosea</taxon>
        <taxon>Eumycetozoa</taxon>
        <taxon>Dictyostelia</taxon>
        <taxon>Dictyosteliales</taxon>
        <taxon>Dictyosteliaceae</taxon>
        <taxon>Dictyostelium</taxon>
    </lineage>
</organism>
<reference key="1">
    <citation type="journal article" date="1994" name="Development">
        <title>Characterization of a novel Dictyostelium discoideum prespore-specific gene, PspB, reveals conserved regulatory sequences.</title>
        <authorList>
            <person name="Powell-Coffman J.A."/>
            <person name="Firtel R.A."/>
        </authorList>
    </citation>
    <scope>NUCLEOTIDE SEQUENCE [GENOMIC DNA]</scope>
    <source>
        <strain>AX3</strain>
    </source>
</reference>
<reference key="2">
    <citation type="journal article" date="1998" name="Biochemistry">
        <title>Two proteins of the Dictyostelium spore coat bind to cellulose in vitro.</title>
        <authorList>
            <person name="Zhang Y."/>
            <person name="Brown R.D. Jr."/>
            <person name="West C.M."/>
        </authorList>
    </citation>
    <scope>NUCLEOTIDE SEQUENCE [GENOMIC DNA]</scope>
    <scope>PROTEIN SEQUENCE OF 159-177; 179-188 AND 420-427</scope>
    <scope>BINDING TO CELLULOSE</scope>
    <source>
        <strain>AX3</strain>
        <strain>WS380B</strain>
        <strain>WS576</strain>
    </source>
</reference>
<reference key="3">
    <citation type="journal article" date="2002" name="Nature">
        <title>Sequence and analysis of chromosome 2 of Dictyostelium discoideum.</title>
        <authorList>
            <person name="Gloeckner G."/>
            <person name="Eichinger L."/>
            <person name="Szafranski K."/>
            <person name="Pachebat J.A."/>
            <person name="Bankier A.T."/>
            <person name="Dear P.H."/>
            <person name="Lehmann R."/>
            <person name="Baumgart C."/>
            <person name="Parra G."/>
            <person name="Abril J.F."/>
            <person name="Guigo R."/>
            <person name="Kumpf K."/>
            <person name="Tunggal B."/>
            <person name="Cox E.C."/>
            <person name="Quail M.A."/>
            <person name="Platzer M."/>
            <person name="Rosenthal A."/>
            <person name="Noegel A.A."/>
        </authorList>
    </citation>
    <scope>NUCLEOTIDE SEQUENCE [LARGE SCALE GENOMIC DNA]</scope>
    <source>
        <strain>AX4</strain>
    </source>
</reference>
<reference key="4">
    <citation type="journal article" date="2005" name="Nature">
        <title>The genome of the social amoeba Dictyostelium discoideum.</title>
        <authorList>
            <person name="Eichinger L."/>
            <person name="Pachebat J.A."/>
            <person name="Gloeckner G."/>
            <person name="Rajandream M.A."/>
            <person name="Sucgang R."/>
            <person name="Berriman M."/>
            <person name="Song J."/>
            <person name="Olsen R."/>
            <person name="Szafranski K."/>
            <person name="Xu Q."/>
            <person name="Tunggal B."/>
            <person name="Kummerfeld S."/>
            <person name="Madera M."/>
            <person name="Konfortov B.A."/>
            <person name="Rivero F."/>
            <person name="Bankier A.T."/>
            <person name="Lehmann R."/>
            <person name="Hamlin N."/>
            <person name="Davies R."/>
            <person name="Gaudet P."/>
            <person name="Fey P."/>
            <person name="Pilcher K."/>
            <person name="Chen G."/>
            <person name="Saunders D."/>
            <person name="Sodergren E.J."/>
            <person name="Davis P."/>
            <person name="Kerhornou A."/>
            <person name="Nie X."/>
            <person name="Hall N."/>
            <person name="Anjard C."/>
            <person name="Hemphill L."/>
            <person name="Bason N."/>
            <person name="Farbrother P."/>
            <person name="Desany B."/>
            <person name="Just E."/>
            <person name="Morio T."/>
            <person name="Rost R."/>
            <person name="Churcher C.M."/>
            <person name="Cooper J."/>
            <person name="Haydock S."/>
            <person name="van Driessche N."/>
            <person name="Cronin A."/>
            <person name="Goodhead I."/>
            <person name="Muzny D.M."/>
            <person name="Mourier T."/>
            <person name="Pain A."/>
            <person name="Lu M."/>
            <person name="Harper D."/>
            <person name="Lindsay R."/>
            <person name="Hauser H."/>
            <person name="James K.D."/>
            <person name="Quiles M."/>
            <person name="Madan Babu M."/>
            <person name="Saito T."/>
            <person name="Buchrieser C."/>
            <person name="Wardroper A."/>
            <person name="Felder M."/>
            <person name="Thangavelu M."/>
            <person name="Johnson D."/>
            <person name="Knights A."/>
            <person name="Loulseged H."/>
            <person name="Mungall K.L."/>
            <person name="Oliver K."/>
            <person name="Price C."/>
            <person name="Quail M.A."/>
            <person name="Urushihara H."/>
            <person name="Hernandez J."/>
            <person name="Rabbinowitsch E."/>
            <person name="Steffen D."/>
            <person name="Sanders M."/>
            <person name="Ma J."/>
            <person name="Kohara Y."/>
            <person name="Sharp S."/>
            <person name="Simmonds M.N."/>
            <person name="Spiegler S."/>
            <person name="Tivey A."/>
            <person name="Sugano S."/>
            <person name="White B."/>
            <person name="Walker D."/>
            <person name="Woodward J.R."/>
            <person name="Winckler T."/>
            <person name="Tanaka Y."/>
            <person name="Shaulsky G."/>
            <person name="Schleicher M."/>
            <person name="Weinstock G.M."/>
            <person name="Rosenthal A."/>
            <person name="Cox E.C."/>
            <person name="Chisholm R.L."/>
            <person name="Gibbs R.A."/>
            <person name="Loomis W.F."/>
            <person name="Platzer M."/>
            <person name="Kay R.R."/>
            <person name="Williams J.G."/>
            <person name="Dear P.H."/>
            <person name="Noegel A.A."/>
            <person name="Barrell B.G."/>
            <person name="Kuspa A."/>
        </authorList>
    </citation>
    <scope>NUCLEOTIDE SEQUENCE [LARGE SCALE GENOMIC DNA]</scope>
    <source>
        <strain>AX4</strain>
    </source>
</reference>
<reference key="5">
    <citation type="journal article" date="1999" name="J. Cell Sci.">
        <title>A linking function for the cellulose-binding protein SP85 in the spore coat of Dictyostelium discoideum.</title>
        <authorList>
            <person name="Zhang Y."/>
            <person name="Zhang P."/>
            <person name="West C.M."/>
        </authorList>
    </citation>
    <scope>CHARACTERIZATION</scope>
    <scope>INTERACTION WITH SP65</scope>
</reference>
<reference key="6">
    <citation type="journal article" date="2003" name="Microbiology">
        <title>Formation of the outer layer of the Dictyostelium spore coat depends on the inner-layer protein SP85/PsB.</title>
        <authorList>
            <person name="Metcalf T."/>
            <person name="Kelley K."/>
            <person name="Erdos G.W."/>
            <person name="Kaplan L."/>
            <person name="West C.M."/>
        </authorList>
    </citation>
    <scope>FUNCTION</scope>
    <scope>MUTAGENESIS OF 352-TRP--HIS-354; 390-ARG--LYS-392; 417-LYS--GLN-419 AND 445-ARG--GLU-448</scope>
</reference>
<reference key="7">
    <citation type="journal article" date="2003" name="J. Biol. Chem.">
        <title>Initiation of mucin-type O-glycosylation in Dictyostelium is homologous to the corresponding step in animals and is important for spore coat function.</title>
        <authorList>
            <person name="Wang F."/>
            <person name="Metcalf T."/>
            <person name="van der Wel H."/>
            <person name="West C.M."/>
        </authorList>
    </citation>
    <scope>GLYCOSYLATION</scope>
</reference>
<reference key="8">
    <citation type="journal article" date="2007" name="Eukaryot. Cell">
        <title>Role of SP65 in assembly of the Dictyostelium discoideum spore coat.</title>
        <authorList>
            <person name="Metcalf T."/>
            <person name="van der Wel H."/>
            <person name="Escalante R."/>
            <person name="Sastre L."/>
            <person name="West C.M."/>
        </authorList>
    </citation>
    <scope>SUBCELLULAR LOCATION</scope>
    <scope>DEVELOPMENTAL STAGE</scope>
    <scope>INTERACTION WITH SP65</scope>
</reference>
<evidence type="ECO:0000255" key="1"/>
<evidence type="ECO:0000256" key="2">
    <source>
        <dbReference type="SAM" id="MobiDB-lite"/>
    </source>
</evidence>
<evidence type="ECO:0000269" key="3">
    <source>
    </source>
</evidence>
<evidence type="ECO:0000269" key="4">
    <source>
    </source>
</evidence>
<evidence type="ECO:0000269" key="5">
    <source>
    </source>
</evidence>
<evidence type="ECO:0000305" key="6"/>
<sequence length="532" mass="59506">MRLLSVLLIGFLCLAGTYAQKYQLSPAYNDPYLTDDKTGTHDFWVQNASLPVFYGFHDWNFQDNSGIMEINGDEMHITGKIYPTVNMGDCHRYNVDLVFKKDKSGNVMPKKELRESAYVPHGPIDPATWKYYTFVQGKWTGFGCDPQNVVFSGAEGGMPLQLGYGANGKNGDNGISVWLIYGYTIVDINCNIRPIITQSPTQPPTQPPTYPPTQPPTQPPTQPPTYPPTYPPTYPPTYPPTYPPTHPPTYPPTYPPTQPPTQPPVQDCSTLECPEGFHCEIVNNRRTCVCDTTVPPTHPPTQSPTYPPTQPPTQPPTYPPTYPPTYPPTQPPRASCDNVRCPRGYHCECNHWENVARCVRNEEPTHRPKPPHHGCRPDSCARGEKCICVRGKIYCIPKTTCDQVRCPRKHHCECNRKGQVFCVPDCPKLTCKQVGCPENHECVSRRGELHCVYVRPPTGRWGDDLSDLGYNQASVEAAIDAYEAQRGQRPHNNIPSNNLHQENNDNLGDGFYDGVEIGFADGGFDVNDLNGF</sequence>
<accession>P54704</accession>
<accession>O61133</accession>
<accession>O61134</accession>
<accession>O61135</accession>
<accession>Q550L6</accession>
<comment type="function">
    <text evidence="3">Required for incorporation of cotE into the spore coat and for the formation of the outer layer. Has a cross-bridging function between cellulose and other coat proteins.</text>
</comment>
<comment type="subunit">
    <text>Binds to cotE.</text>
</comment>
<comment type="interaction">
    <interactant intactId="EBI-1808765">
        <id>P54704</id>
    </interactant>
    <interactant intactId="EBI-1808756">
        <id>Q9NAX4</id>
        <label>cotE</label>
    </interactant>
    <organismsDiffer>false</organismsDiffer>
    <experiments>2</experiments>
</comment>
<comment type="subcellular location">
    <subcellularLocation>
        <location evidence="5">Spore wall</location>
    </subcellularLocation>
    <text>Accumulates in prespore vesicles coordinately with other coat proteins.</text>
</comment>
<comment type="developmental stage">
    <text evidence="5">Expressed from 17.5 hours of development of the fruiting bodies.</text>
</comment>
<comment type="domain">
    <text>The N-terminal part (1-200) directs accumulation in prespore vesicles.</text>
</comment>
<comment type="domain">
    <text>The C-terminal part (333-532) binds cellulose and cotE simultaneously and specifies incorporation into the coat.</text>
</comment>
<comment type="PTM">
    <text evidence="4">O-glycosylated.</text>
</comment>
<comment type="sequence caution" evidence="6">
    <conflict type="frameshift">
        <sequence resource="EMBL-CDS" id="AAC60506"/>
    </conflict>
</comment>
<dbReference type="EMBL" id="S72639">
    <property type="protein sequence ID" value="AAC60506.1"/>
    <property type="status" value="ALT_FRAME"/>
    <property type="molecule type" value="Genomic_DNA"/>
</dbReference>
<dbReference type="EMBL" id="AF066071">
    <property type="protein sequence ID" value="AAC19123.1"/>
    <property type="molecule type" value="Genomic_DNA"/>
</dbReference>
<dbReference type="EMBL" id="AF066072">
    <property type="protein sequence ID" value="AAC19124.1"/>
    <property type="molecule type" value="Genomic_DNA"/>
</dbReference>
<dbReference type="EMBL" id="AF066073">
    <property type="protein sequence ID" value="AAC19125.1"/>
    <property type="molecule type" value="Genomic_DNA"/>
</dbReference>
<dbReference type="EMBL" id="AAFI02000019">
    <property type="protein sequence ID" value="EAL68971.1"/>
    <property type="molecule type" value="Genomic_DNA"/>
</dbReference>
<dbReference type="RefSeq" id="XP_642916.1">
    <property type="nucleotide sequence ID" value="XM_637824.1"/>
</dbReference>
<dbReference type="FunCoup" id="P54704">
    <property type="interactions" value="648"/>
</dbReference>
<dbReference type="IntAct" id="P54704">
    <property type="interactions" value="1"/>
</dbReference>
<dbReference type="STRING" id="44689.P54704"/>
<dbReference type="GlyCosmos" id="P54704">
    <property type="glycosylation" value="1 site, No reported glycans"/>
</dbReference>
<dbReference type="GlyGen" id="P54704">
    <property type="glycosylation" value="1 site"/>
</dbReference>
<dbReference type="PaxDb" id="44689-DDB0185060"/>
<dbReference type="EnsemblProtists" id="EAL68971">
    <property type="protein sequence ID" value="EAL68971"/>
    <property type="gene ID" value="DDB_G0276939"/>
</dbReference>
<dbReference type="GeneID" id="8620782"/>
<dbReference type="KEGG" id="ddi:DDB_G0276939"/>
<dbReference type="dictyBase" id="DDB_G0276939">
    <property type="gene designation" value="pspB"/>
</dbReference>
<dbReference type="VEuPathDB" id="AmoebaDB:DDB_G0276939"/>
<dbReference type="eggNOG" id="ENOG502RFIS">
    <property type="taxonomic scope" value="Eukaryota"/>
</dbReference>
<dbReference type="HOGENOM" id="CLU_512347_0_0_1"/>
<dbReference type="InParanoid" id="P54704"/>
<dbReference type="OMA" id="DNKWEND"/>
<dbReference type="PRO" id="PR:P54704"/>
<dbReference type="Proteomes" id="UP000002195">
    <property type="component" value="Chromosome 2"/>
</dbReference>
<dbReference type="GO" id="GO:0090665">
    <property type="term" value="C:glycoprotein complex"/>
    <property type="evidence" value="ECO:0000314"/>
    <property type="project" value="dictyBase"/>
</dbReference>
<dbReference type="GO" id="GO:0031160">
    <property type="term" value="C:spore wall"/>
    <property type="evidence" value="ECO:0000314"/>
    <property type="project" value="dictyBase"/>
</dbReference>
<dbReference type="GO" id="GO:0030248">
    <property type="term" value="F:cellulose binding"/>
    <property type="evidence" value="ECO:0000314"/>
    <property type="project" value="dictyBase"/>
</dbReference>
<dbReference type="GO" id="GO:0005199">
    <property type="term" value="F:structural constituent of cell wall"/>
    <property type="evidence" value="ECO:0000315"/>
    <property type="project" value="dictyBase"/>
</dbReference>
<dbReference type="GO" id="GO:0099614">
    <property type="term" value="P:protein localization to spore cell wall"/>
    <property type="evidence" value="ECO:0000315"/>
    <property type="project" value="dictyBase"/>
</dbReference>
<dbReference type="GO" id="GO:0042244">
    <property type="term" value="P:spore wall assembly"/>
    <property type="evidence" value="ECO:0000315"/>
    <property type="project" value="dictyBase"/>
</dbReference>
<dbReference type="GO" id="GO:0030435">
    <property type="term" value="P:sporulation resulting in formation of a cellular spore"/>
    <property type="evidence" value="ECO:0000315"/>
    <property type="project" value="dictyBase"/>
</dbReference>
<dbReference type="InterPro" id="IPR003645">
    <property type="entry name" value="Fol_N"/>
</dbReference>
<dbReference type="InterPro" id="IPR051860">
    <property type="entry name" value="Plasmodium_CSP_Invasion"/>
</dbReference>
<dbReference type="PANTHER" id="PTHR44826">
    <property type="entry name" value="SPORE COAT PROTEIN SP85"/>
    <property type="match status" value="1"/>
</dbReference>
<dbReference type="PANTHER" id="PTHR44826:SF3">
    <property type="entry name" value="SPORE COAT PROTEIN SP85"/>
    <property type="match status" value="1"/>
</dbReference>
<dbReference type="PRINTS" id="PR01217">
    <property type="entry name" value="PRICHEXTENSN"/>
</dbReference>
<dbReference type="SMART" id="SM00274">
    <property type="entry name" value="FOLN"/>
    <property type="match status" value="4"/>
</dbReference>
<name>SP85_DICDI</name>
<proteinExistence type="evidence at protein level"/>
<gene>
    <name type="primary">pspB</name>
    <name type="synonym">PsB</name>
    <name type="synonym">SP85</name>
    <name type="ORF">DDB_G0276939</name>
</gene>
<keyword id="KW-0903">Direct protein sequencing</keyword>
<keyword id="KW-0325">Glycoprotein</keyword>
<keyword id="KW-1185">Reference proteome</keyword>
<keyword id="KW-0677">Repeat</keyword>
<keyword id="KW-0732">Signal</keyword>
<keyword id="KW-0749">Sporulation</keyword>